<protein>
    <recommendedName>
        <fullName>LIM/homeobox protein Lhx9</fullName>
        <shortName>LIM homeobox protein 9</shortName>
    </recommendedName>
</protein>
<reference key="1">
    <citation type="journal article" date="2001" name="J. Clin. Endocrinol. Metab.">
        <title>Absence of mutations involving the LIM homeobox domain gene LHX9 in 46,XY gonadal agenesis and dysgenesis.</title>
        <authorList>
            <person name="Ottolenghi C."/>
            <person name="Moreira-Filho C."/>
            <person name="Mendonca B.B."/>
            <person name="Barbieri M."/>
            <person name="Fellous M."/>
            <person name="Berkovitz G.D."/>
            <person name="McElreavey K."/>
        </authorList>
    </citation>
    <scope>NUCLEOTIDE SEQUENCE [GENOMIC DNA / MRNA] (ISOFORM 2)</scope>
    <source>
        <tissue>Testis</tissue>
    </source>
</reference>
<reference key="2">
    <citation type="submission" date="2003-08" db="EMBL/GenBank/DDBJ databases">
        <title>Cloning and characterization of human novel LIM-homeobox 9 gene.</title>
        <authorList>
            <person name="Shan Y.X."/>
            <person name="Pan J."/>
            <person name="Guo Z.K."/>
            <person name="Geng D.C."/>
            <person name="Huang C.Q."/>
            <person name="Yu L."/>
        </authorList>
    </citation>
    <scope>NUCLEOTIDE SEQUENCE [MRNA] (ISOFORM 1)</scope>
</reference>
<reference key="3">
    <citation type="journal article" date="2006" name="Nature">
        <title>The DNA sequence and biological annotation of human chromosome 1.</title>
        <authorList>
            <person name="Gregory S.G."/>
            <person name="Barlow K.F."/>
            <person name="McLay K.E."/>
            <person name="Kaul R."/>
            <person name="Swarbreck D."/>
            <person name="Dunham A."/>
            <person name="Scott C.E."/>
            <person name="Howe K.L."/>
            <person name="Woodfine K."/>
            <person name="Spencer C.C.A."/>
            <person name="Jones M.C."/>
            <person name="Gillson C."/>
            <person name="Searle S."/>
            <person name="Zhou Y."/>
            <person name="Kokocinski F."/>
            <person name="McDonald L."/>
            <person name="Evans R."/>
            <person name="Phillips K."/>
            <person name="Atkinson A."/>
            <person name="Cooper R."/>
            <person name="Jones C."/>
            <person name="Hall R.E."/>
            <person name="Andrews T.D."/>
            <person name="Lloyd C."/>
            <person name="Ainscough R."/>
            <person name="Almeida J.P."/>
            <person name="Ambrose K.D."/>
            <person name="Anderson F."/>
            <person name="Andrew R.W."/>
            <person name="Ashwell R.I.S."/>
            <person name="Aubin K."/>
            <person name="Babbage A.K."/>
            <person name="Bagguley C.L."/>
            <person name="Bailey J."/>
            <person name="Beasley H."/>
            <person name="Bethel G."/>
            <person name="Bird C.P."/>
            <person name="Bray-Allen S."/>
            <person name="Brown J.Y."/>
            <person name="Brown A.J."/>
            <person name="Buckley D."/>
            <person name="Burton J."/>
            <person name="Bye J."/>
            <person name="Carder C."/>
            <person name="Chapman J.C."/>
            <person name="Clark S.Y."/>
            <person name="Clarke G."/>
            <person name="Clee C."/>
            <person name="Cobley V."/>
            <person name="Collier R.E."/>
            <person name="Corby N."/>
            <person name="Coville G.J."/>
            <person name="Davies J."/>
            <person name="Deadman R."/>
            <person name="Dunn M."/>
            <person name="Earthrowl M."/>
            <person name="Ellington A.G."/>
            <person name="Errington H."/>
            <person name="Frankish A."/>
            <person name="Frankland J."/>
            <person name="French L."/>
            <person name="Garner P."/>
            <person name="Garnett J."/>
            <person name="Gay L."/>
            <person name="Ghori M.R.J."/>
            <person name="Gibson R."/>
            <person name="Gilby L.M."/>
            <person name="Gillett W."/>
            <person name="Glithero R.J."/>
            <person name="Grafham D.V."/>
            <person name="Griffiths C."/>
            <person name="Griffiths-Jones S."/>
            <person name="Grocock R."/>
            <person name="Hammond S."/>
            <person name="Harrison E.S.I."/>
            <person name="Hart E."/>
            <person name="Haugen E."/>
            <person name="Heath P.D."/>
            <person name="Holmes S."/>
            <person name="Holt K."/>
            <person name="Howden P.J."/>
            <person name="Hunt A.R."/>
            <person name="Hunt S.E."/>
            <person name="Hunter G."/>
            <person name="Isherwood J."/>
            <person name="James R."/>
            <person name="Johnson C."/>
            <person name="Johnson D."/>
            <person name="Joy A."/>
            <person name="Kay M."/>
            <person name="Kershaw J.K."/>
            <person name="Kibukawa M."/>
            <person name="Kimberley A.M."/>
            <person name="King A."/>
            <person name="Knights A.J."/>
            <person name="Lad H."/>
            <person name="Laird G."/>
            <person name="Lawlor S."/>
            <person name="Leongamornlert D.A."/>
            <person name="Lloyd D.M."/>
            <person name="Loveland J."/>
            <person name="Lovell J."/>
            <person name="Lush M.J."/>
            <person name="Lyne R."/>
            <person name="Martin S."/>
            <person name="Mashreghi-Mohammadi M."/>
            <person name="Matthews L."/>
            <person name="Matthews N.S.W."/>
            <person name="McLaren S."/>
            <person name="Milne S."/>
            <person name="Mistry S."/>
            <person name="Moore M.J.F."/>
            <person name="Nickerson T."/>
            <person name="O'Dell C.N."/>
            <person name="Oliver K."/>
            <person name="Palmeiri A."/>
            <person name="Palmer S.A."/>
            <person name="Parker A."/>
            <person name="Patel D."/>
            <person name="Pearce A.V."/>
            <person name="Peck A.I."/>
            <person name="Pelan S."/>
            <person name="Phelps K."/>
            <person name="Phillimore B.J."/>
            <person name="Plumb R."/>
            <person name="Rajan J."/>
            <person name="Raymond C."/>
            <person name="Rouse G."/>
            <person name="Saenphimmachak C."/>
            <person name="Sehra H.K."/>
            <person name="Sheridan E."/>
            <person name="Shownkeen R."/>
            <person name="Sims S."/>
            <person name="Skuce C.D."/>
            <person name="Smith M."/>
            <person name="Steward C."/>
            <person name="Subramanian S."/>
            <person name="Sycamore N."/>
            <person name="Tracey A."/>
            <person name="Tromans A."/>
            <person name="Van Helmond Z."/>
            <person name="Wall M."/>
            <person name="Wallis J.M."/>
            <person name="White S."/>
            <person name="Whitehead S.L."/>
            <person name="Wilkinson J.E."/>
            <person name="Willey D.L."/>
            <person name="Williams H."/>
            <person name="Wilming L."/>
            <person name="Wray P.W."/>
            <person name="Wu Z."/>
            <person name="Coulson A."/>
            <person name="Vaudin M."/>
            <person name="Sulston J.E."/>
            <person name="Durbin R.M."/>
            <person name="Hubbard T."/>
            <person name="Wooster R."/>
            <person name="Dunham I."/>
            <person name="Carter N.P."/>
            <person name="McVean G."/>
            <person name="Ross M.T."/>
            <person name="Harrow J."/>
            <person name="Olson M.V."/>
            <person name="Beck S."/>
            <person name="Rogers J."/>
            <person name="Bentley D.R."/>
        </authorList>
    </citation>
    <scope>NUCLEOTIDE SEQUENCE [LARGE SCALE GENOMIC DNA]</scope>
</reference>
<reference key="4">
    <citation type="submission" date="2005-07" db="EMBL/GenBank/DDBJ databases">
        <authorList>
            <person name="Mural R.J."/>
            <person name="Istrail S."/>
            <person name="Sutton G.G."/>
            <person name="Florea L."/>
            <person name="Halpern A.L."/>
            <person name="Mobarry C.M."/>
            <person name="Lippert R."/>
            <person name="Walenz B."/>
            <person name="Shatkay H."/>
            <person name="Dew I."/>
            <person name="Miller J.R."/>
            <person name="Flanigan M.J."/>
            <person name="Edwards N.J."/>
            <person name="Bolanos R."/>
            <person name="Fasulo D."/>
            <person name="Halldorsson B.V."/>
            <person name="Hannenhalli S."/>
            <person name="Turner R."/>
            <person name="Yooseph S."/>
            <person name="Lu F."/>
            <person name="Nusskern D.R."/>
            <person name="Shue B.C."/>
            <person name="Zheng X.H."/>
            <person name="Zhong F."/>
            <person name="Delcher A.L."/>
            <person name="Huson D.H."/>
            <person name="Kravitz S.A."/>
            <person name="Mouchard L."/>
            <person name="Reinert K."/>
            <person name="Remington K.A."/>
            <person name="Clark A.G."/>
            <person name="Waterman M.S."/>
            <person name="Eichler E.E."/>
            <person name="Adams M.D."/>
            <person name="Hunkapiller M.W."/>
            <person name="Myers E.W."/>
            <person name="Venter J.C."/>
        </authorList>
    </citation>
    <scope>NUCLEOTIDE SEQUENCE [LARGE SCALE GENOMIC DNA]</scope>
</reference>
<reference key="5">
    <citation type="journal article" date="2004" name="Genome Res.">
        <title>The status, quality, and expansion of the NIH full-length cDNA project: the Mammalian Gene Collection (MGC).</title>
        <authorList>
            <consortium name="The MGC Project Team"/>
        </authorList>
    </citation>
    <scope>NUCLEOTIDE SEQUENCE [LARGE SCALE MRNA] (ISOFORM 1)</scope>
</reference>
<reference key="6">
    <citation type="submission" date="2006-10" db="PDB data bank">
        <title>Solution structure of the homeobox domain of LIM/homeobox protein LHX9.</title>
        <authorList>
            <consortium name="RIKEN structural genomics initiative (RSGI)"/>
        </authorList>
    </citation>
    <scope>STRUCTURE BY NMR OF 268-334</scope>
</reference>
<keyword id="KW-0002">3D-structure</keyword>
<keyword id="KW-0025">Alternative splicing</keyword>
<keyword id="KW-0238">DNA-binding</keyword>
<keyword id="KW-0371">Homeobox</keyword>
<keyword id="KW-0440">LIM domain</keyword>
<keyword id="KW-0479">Metal-binding</keyword>
<keyword id="KW-0539">Nucleus</keyword>
<keyword id="KW-1267">Proteomics identification</keyword>
<keyword id="KW-1185">Reference proteome</keyword>
<keyword id="KW-0677">Repeat</keyword>
<keyword id="KW-0862">Zinc</keyword>
<feature type="chain" id="PRO_0000075798" description="LIM/homeobox protein Lhx9">
    <location>
        <begin position="1"/>
        <end position="397"/>
    </location>
</feature>
<feature type="domain" description="LIM zinc-binding 1" evidence="3">
    <location>
        <begin position="69"/>
        <end position="130"/>
    </location>
</feature>
<feature type="domain" description="LIM zinc-binding 2" evidence="3">
    <location>
        <begin position="131"/>
        <end position="193"/>
    </location>
</feature>
<feature type="DNA-binding region" description="Homeobox" evidence="2">
    <location>
        <begin position="267"/>
        <end position="326"/>
    </location>
</feature>
<feature type="region of interest" description="Disordered" evidence="4">
    <location>
        <begin position="248"/>
        <end position="272"/>
    </location>
</feature>
<feature type="region of interest" description="Disordered" evidence="4">
    <location>
        <begin position="330"/>
        <end position="364"/>
    </location>
</feature>
<feature type="region of interest" description="Disordered" evidence="4">
    <location>
        <begin position="378"/>
        <end position="397"/>
    </location>
</feature>
<feature type="compositionally biased region" description="Low complexity" evidence="4">
    <location>
        <begin position="353"/>
        <end position="364"/>
    </location>
</feature>
<feature type="splice variant" id="VSP_036428" description="In isoform 2 and isoform 3." evidence="5">
    <original>MEIVGCRAEDNSCPFRPP</original>
    <variation>MLNGTTLEA</variation>
    <location>
        <begin position="1"/>
        <end position="18"/>
    </location>
</feature>
<feature type="splice variant" id="VSP_036429" description="In isoform 3 and isoform 4." evidence="6">
    <original>VWFQNARAKFRRNLLRQENGGVDKADGTSLPAPPSADSGALTPPGTATTLTDLTNPTITVVTSVTSNMDSHESGSPSQTTLTNLF</original>
    <variation>GEQILGHYSQTSRRLKIP</variation>
    <location>
        <begin position="313"/>
        <end position="397"/>
    </location>
</feature>
<feature type="helix" evidence="7">
    <location>
        <begin position="276"/>
        <end position="288"/>
    </location>
</feature>
<feature type="helix" evidence="7">
    <location>
        <begin position="294"/>
        <end position="303"/>
    </location>
</feature>
<feature type="helix" evidence="7">
    <location>
        <begin position="308"/>
        <end position="327"/>
    </location>
</feature>
<accession>Q9NQ69</accession>
<accession>Q5VUE2</accession>
<accession>Q5VUE3</accession>
<accession>Q5VUE6</accession>
<accession>Q86UH2</accession>
<accession>Q9BYU6</accession>
<accession>Q9NQ70</accession>
<dbReference type="EMBL" id="AJ277915">
    <property type="protein sequence ID" value="CAB97493.1"/>
    <property type="molecule type" value="mRNA"/>
</dbReference>
<dbReference type="EMBL" id="AJ277916">
    <property type="protein sequence ID" value="CAB98128.1"/>
    <property type="status" value="ALT_SEQ"/>
    <property type="molecule type" value="Genomic_DNA"/>
</dbReference>
<dbReference type="EMBL" id="AJ277917">
    <property type="protein sequence ID" value="CAB98128.1"/>
    <property type="status" value="JOINED"/>
    <property type="molecule type" value="Genomic_DNA"/>
</dbReference>
<dbReference type="EMBL" id="AJ277918">
    <property type="protein sequence ID" value="CAB98128.1"/>
    <property type="status" value="JOINED"/>
    <property type="molecule type" value="Genomic_DNA"/>
</dbReference>
<dbReference type="EMBL" id="AJ277919">
    <property type="protein sequence ID" value="CAB98128.1"/>
    <property type="status" value="JOINED"/>
    <property type="molecule type" value="Genomic_DNA"/>
</dbReference>
<dbReference type="EMBL" id="AJ277920">
    <property type="protein sequence ID" value="CAB98128.1"/>
    <property type="status" value="JOINED"/>
    <property type="molecule type" value="Genomic_DNA"/>
</dbReference>
<dbReference type="EMBL" id="AJ296272">
    <property type="protein sequence ID" value="CAC33174.1"/>
    <property type="molecule type" value="mRNA"/>
</dbReference>
<dbReference type="EMBL" id="AY273889">
    <property type="protein sequence ID" value="AAP32471.2"/>
    <property type="molecule type" value="mRNA"/>
</dbReference>
<dbReference type="EMBL" id="AL590115">
    <property type="protein sequence ID" value="CAH71760.1"/>
    <property type="molecule type" value="Genomic_DNA"/>
</dbReference>
<dbReference type="EMBL" id="AL590115">
    <property type="protein sequence ID" value="CAH71761.1"/>
    <property type="molecule type" value="Genomic_DNA"/>
</dbReference>
<dbReference type="EMBL" id="AL590115">
    <property type="protein sequence ID" value="CAH71763.1"/>
    <property type="molecule type" value="Genomic_DNA"/>
</dbReference>
<dbReference type="EMBL" id="AL590115">
    <property type="protein sequence ID" value="CAH71764.1"/>
    <property type="molecule type" value="Genomic_DNA"/>
</dbReference>
<dbReference type="EMBL" id="CH471067">
    <property type="protein sequence ID" value="EAW91290.1"/>
    <property type="molecule type" value="Genomic_DNA"/>
</dbReference>
<dbReference type="EMBL" id="CH471067">
    <property type="protein sequence ID" value="EAW91292.1"/>
    <property type="molecule type" value="Genomic_DNA"/>
</dbReference>
<dbReference type="EMBL" id="BC131622">
    <property type="protein sequence ID" value="AAI31623.1"/>
    <property type="molecule type" value="mRNA"/>
</dbReference>
<dbReference type="CCDS" id="CCDS1393.1">
    <molecule id="Q9NQ69-1"/>
</dbReference>
<dbReference type="CCDS" id="CCDS30962.1">
    <molecule id="Q9NQ69-2"/>
</dbReference>
<dbReference type="RefSeq" id="NP_001014434.1">
    <molecule id="Q9NQ69-2"/>
    <property type="nucleotide sequence ID" value="NM_001014434.2"/>
</dbReference>
<dbReference type="RefSeq" id="NP_001357142.1">
    <molecule id="Q9NQ69-4"/>
    <property type="nucleotide sequence ID" value="NM_001370213.1"/>
</dbReference>
<dbReference type="RefSeq" id="NP_064589.2">
    <molecule id="Q9NQ69-1"/>
    <property type="nucleotide sequence ID" value="NM_020204.2"/>
</dbReference>
<dbReference type="PDB" id="2DMQ">
    <property type="method" value="NMR"/>
    <property type="chains" value="A=268-334"/>
</dbReference>
<dbReference type="PDBsum" id="2DMQ"/>
<dbReference type="SMR" id="Q9NQ69"/>
<dbReference type="BioGRID" id="121280">
    <property type="interactions" value="14"/>
</dbReference>
<dbReference type="FunCoup" id="Q9NQ69">
    <property type="interactions" value="1473"/>
</dbReference>
<dbReference type="IntAct" id="Q9NQ69">
    <property type="interactions" value="10"/>
</dbReference>
<dbReference type="STRING" id="9606.ENSP00000356357"/>
<dbReference type="iPTMnet" id="Q9NQ69"/>
<dbReference type="PhosphoSitePlus" id="Q9NQ69"/>
<dbReference type="BioMuta" id="LHX9"/>
<dbReference type="DMDM" id="224471883"/>
<dbReference type="MassIVE" id="Q9NQ69"/>
<dbReference type="PaxDb" id="9606-ENSP00000356357"/>
<dbReference type="PeptideAtlas" id="Q9NQ69"/>
<dbReference type="ProteomicsDB" id="82089">
    <molecule id="Q9NQ69-1"/>
</dbReference>
<dbReference type="ProteomicsDB" id="82090">
    <molecule id="Q9NQ69-2"/>
</dbReference>
<dbReference type="ProteomicsDB" id="82091">
    <molecule id="Q9NQ69-3"/>
</dbReference>
<dbReference type="ProteomicsDB" id="82092">
    <molecule id="Q9NQ69-4"/>
</dbReference>
<dbReference type="Antibodypedia" id="1450">
    <property type="antibodies" value="93 antibodies from 18 providers"/>
</dbReference>
<dbReference type="DNASU" id="56956"/>
<dbReference type="Ensembl" id="ENST00000367387.6">
    <molecule id="Q9NQ69-1"/>
    <property type="protein sequence ID" value="ENSP00000356357.4"/>
    <property type="gene ID" value="ENSG00000143355.16"/>
</dbReference>
<dbReference type="Ensembl" id="ENST00000367390.7">
    <molecule id="Q9NQ69-2"/>
    <property type="protein sequence ID" value="ENSP00000356360.3"/>
    <property type="gene ID" value="ENSG00000143355.16"/>
</dbReference>
<dbReference type="Ensembl" id="ENST00000367391.5">
    <molecule id="Q9NQ69-3"/>
    <property type="protein sequence ID" value="ENSP00000356361.1"/>
    <property type="gene ID" value="ENSG00000143355.16"/>
</dbReference>
<dbReference type="GeneID" id="56956"/>
<dbReference type="KEGG" id="hsa:56956"/>
<dbReference type="MANE-Select" id="ENST00000367387.6">
    <property type="protein sequence ID" value="ENSP00000356357.4"/>
    <property type="RefSeq nucleotide sequence ID" value="NM_020204.3"/>
    <property type="RefSeq protein sequence ID" value="NP_064589.2"/>
</dbReference>
<dbReference type="UCSC" id="uc001gui.2">
    <molecule id="Q9NQ69-1"/>
    <property type="organism name" value="human"/>
</dbReference>
<dbReference type="AGR" id="HGNC:14222"/>
<dbReference type="CTD" id="56956"/>
<dbReference type="DisGeNET" id="56956"/>
<dbReference type="GeneCards" id="LHX9"/>
<dbReference type="HGNC" id="HGNC:14222">
    <property type="gene designation" value="LHX9"/>
</dbReference>
<dbReference type="HPA" id="ENSG00000143355">
    <property type="expression patterns" value="Tissue enriched (ovary)"/>
</dbReference>
<dbReference type="MIM" id="606066">
    <property type="type" value="gene"/>
</dbReference>
<dbReference type="neXtProt" id="NX_Q9NQ69"/>
<dbReference type="OpenTargets" id="ENSG00000143355"/>
<dbReference type="PharmGKB" id="PA30368"/>
<dbReference type="VEuPathDB" id="HostDB:ENSG00000143355"/>
<dbReference type="eggNOG" id="KOG0490">
    <property type="taxonomic scope" value="Eukaryota"/>
</dbReference>
<dbReference type="GeneTree" id="ENSGT00940000158821"/>
<dbReference type="HOGENOM" id="CLU_027802_4_1_1"/>
<dbReference type="InParanoid" id="Q9NQ69"/>
<dbReference type="OMA" id="LICCECK"/>
<dbReference type="OrthoDB" id="9990008at2759"/>
<dbReference type="PAN-GO" id="Q9NQ69">
    <property type="GO annotations" value="5 GO annotations based on evolutionary models"/>
</dbReference>
<dbReference type="PhylomeDB" id="Q9NQ69"/>
<dbReference type="TreeFam" id="TF315442"/>
<dbReference type="PathwayCommons" id="Q9NQ69"/>
<dbReference type="Reactome" id="R-HSA-9010553">
    <property type="pathway name" value="Regulation of expression of SLITs and ROBOs"/>
</dbReference>
<dbReference type="SignaLink" id="Q9NQ69"/>
<dbReference type="BioGRID-ORCS" id="56956">
    <property type="hits" value="12 hits in 1170 CRISPR screens"/>
</dbReference>
<dbReference type="EvolutionaryTrace" id="Q9NQ69"/>
<dbReference type="GenomeRNAi" id="56956"/>
<dbReference type="Pharos" id="Q9NQ69">
    <property type="development level" value="Tbio"/>
</dbReference>
<dbReference type="PRO" id="PR:Q9NQ69"/>
<dbReference type="Proteomes" id="UP000005640">
    <property type="component" value="Chromosome 1"/>
</dbReference>
<dbReference type="RNAct" id="Q9NQ69">
    <property type="molecule type" value="protein"/>
</dbReference>
<dbReference type="Bgee" id="ENSG00000143355">
    <property type="expression patterns" value="Expressed in germinal epithelium of ovary and 55 other cell types or tissues"/>
</dbReference>
<dbReference type="ExpressionAtlas" id="Q9NQ69">
    <property type="expression patterns" value="baseline and differential"/>
</dbReference>
<dbReference type="GO" id="GO:0000785">
    <property type="term" value="C:chromatin"/>
    <property type="evidence" value="ECO:0000247"/>
    <property type="project" value="NTNU_SB"/>
</dbReference>
<dbReference type="GO" id="GO:0005634">
    <property type="term" value="C:nucleus"/>
    <property type="evidence" value="ECO:0000318"/>
    <property type="project" value="GO_Central"/>
</dbReference>
<dbReference type="GO" id="GO:0000981">
    <property type="term" value="F:DNA-binding transcription factor activity, RNA polymerase II-specific"/>
    <property type="evidence" value="ECO:0000247"/>
    <property type="project" value="NTNU_SB"/>
</dbReference>
<dbReference type="GO" id="GO:0046872">
    <property type="term" value="F:metal ion binding"/>
    <property type="evidence" value="ECO:0007669"/>
    <property type="project" value="UniProtKB-KW"/>
</dbReference>
<dbReference type="GO" id="GO:0000977">
    <property type="term" value="F:RNA polymerase II transcription regulatory region sequence-specific DNA binding"/>
    <property type="evidence" value="ECO:0000318"/>
    <property type="project" value="GO_Central"/>
</dbReference>
<dbReference type="GO" id="GO:1990837">
    <property type="term" value="F:sequence-specific double-stranded DNA binding"/>
    <property type="evidence" value="ECO:0000314"/>
    <property type="project" value="ARUK-UCL"/>
</dbReference>
<dbReference type="GO" id="GO:0008283">
    <property type="term" value="P:cell population proliferation"/>
    <property type="evidence" value="ECO:0007669"/>
    <property type="project" value="Ensembl"/>
</dbReference>
<dbReference type="GO" id="GO:0097380">
    <property type="term" value="P:dorsal spinal cord interneuron anterior axon guidance"/>
    <property type="evidence" value="ECO:0000250"/>
    <property type="project" value="UniProtKB"/>
</dbReference>
<dbReference type="GO" id="GO:0008585">
    <property type="term" value="P:female gonad development"/>
    <property type="evidence" value="ECO:0007669"/>
    <property type="project" value="Ensembl"/>
</dbReference>
<dbReference type="GO" id="GO:0035262">
    <property type="term" value="P:gonad morphogenesis"/>
    <property type="evidence" value="ECO:0007669"/>
    <property type="project" value="Ensembl"/>
</dbReference>
<dbReference type="GO" id="GO:0008584">
    <property type="term" value="P:male gonad development"/>
    <property type="evidence" value="ECO:0007669"/>
    <property type="project" value="Ensembl"/>
</dbReference>
<dbReference type="GO" id="GO:0045892">
    <property type="term" value="P:negative regulation of DNA-templated transcription"/>
    <property type="evidence" value="ECO:0000250"/>
    <property type="project" value="UniProtKB"/>
</dbReference>
<dbReference type="GO" id="GO:0030182">
    <property type="term" value="P:neuron differentiation"/>
    <property type="evidence" value="ECO:0000318"/>
    <property type="project" value="GO_Central"/>
</dbReference>
<dbReference type="GO" id="GO:0006357">
    <property type="term" value="P:regulation of transcription by RNA polymerase II"/>
    <property type="evidence" value="ECO:0000318"/>
    <property type="project" value="GO_Central"/>
</dbReference>
<dbReference type="CDD" id="cd00086">
    <property type="entry name" value="homeodomain"/>
    <property type="match status" value="1"/>
</dbReference>
<dbReference type="CDD" id="cd09469">
    <property type="entry name" value="LIM1_Lhx2"/>
    <property type="match status" value="1"/>
</dbReference>
<dbReference type="CDD" id="cd09377">
    <property type="entry name" value="LIM2_Lhx2_Lhx9"/>
    <property type="match status" value="1"/>
</dbReference>
<dbReference type="FunFam" id="1.10.10.60:FF:000027">
    <property type="entry name" value="LIM/homeobox protein Lhx9"/>
    <property type="match status" value="1"/>
</dbReference>
<dbReference type="FunFam" id="2.10.110.10:FF:000039">
    <property type="entry name" value="LIM/homeobox protein Lhx9 isoform 2"/>
    <property type="match status" value="1"/>
</dbReference>
<dbReference type="FunFam" id="2.10.110.10:FF:000033">
    <property type="entry name" value="LIM/homeobox protein Lhx9 isoform X2"/>
    <property type="match status" value="1"/>
</dbReference>
<dbReference type="Gene3D" id="2.10.110.10">
    <property type="entry name" value="Cysteine Rich Protein"/>
    <property type="match status" value="2"/>
</dbReference>
<dbReference type="Gene3D" id="1.10.10.60">
    <property type="entry name" value="Homeodomain-like"/>
    <property type="match status" value="1"/>
</dbReference>
<dbReference type="InterPro" id="IPR001356">
    <property type="entry name" value="HD"/>
</dbReference>
<dbReference type="InterPro" id="IPR017970">
    <property type="entry name" value="Homeobox_CS"/>
</dbReference>
<dbReference type="InterPro" id="IPR009057">
    <property type="entry name" value="Homeodomain-like_sf"/>
</dbReference>
<dbReference type="InterPro" id="IPR050453">
    <property type="entry name" value="LIM_Homeobox_TF"/>
</dbReference>
<dbReference type="InterPro" id="IPR001781">
    <property type="entry name" value="Znf_LIM"/>
</dbReference>
<dbReference type="PANTHER" id="PTHR24208">
    <property type="entry name" value="LIM/HOMEOBOX PROTEIN LHX"/>
    <property type="match status" value="1"/>
</dbReference>
<dbReference type="PANTHER" id="PTHR24208:SF95">
    <property type="entry name" value="LIM_HOMEOBOX PROTEIN LHX9"/>
    <property type="match status" value="1"/>
</dbReference>
<dbReference type="Pfam" id="PF00046">
    <property type="entry name" value="Homeodomain"/>
    <property type="match status" value="1"/>
</dbReference>
<dbReference type="Pfam" id="PF00412">
    <property type="entry name" value="LIM"/>
    <property type="match status" value="2"/>
</dbReference>
<dbReference type="SMART" id="SM00389">
    <property type="entry name" value="HOX"/>
    <property type="match status" value="1"/>
</dbReference>
<dbReference type="SMART" id="SM00132">
    <property type="entry name" value="LIM"/>
    <property type="match status" value="2"/>
</dbReference>
<dbReference type="SUPFAM" id="SSF57716">
    <property type="entry name" value="Glucocorticoid receptor-like (DNA-binding domain)"/>
    <property type="match status" value="2"/>
</dbReference>
<dbReference type="SUPFAM" id="SSF46689">
    <property type="entry name" value="Homeodomain-like"/>
    <property type="match status" value="1"/>
</dbReference>
<dbReference type="PROSITE" id="PS00027">
    <property type="entry name" value="HOMEOBOX_1"/>
    <property type="match status" value="1"/>
</dbReference>
<dbReference type="PROSITE" id="PS50071">
    <property type="entry name" value="HOMEOBOX_2"/>
    <property type="match status" value="1"/>
</dbReference>
<dbReference type="PROSITE" id="PS00478">
    <property type="entry name" value="LIM_DOMAIN_1"/>
    <property type="match status" value="2"/>
</dbReference>
<dbReference type="PROSITE" id="PS50023">
    <property type="entry name" value="LIM_DOMAIN_2"/>
    <property type="match status" value="2"/>
</dbReference>
<comment type="function">
    <text evidence="1">Involved in gonadal development.</text>
</comment>
<comment type="subunit">
    <text evidence="1">Interacts with LDB1 and LDB2.</text>
</comment>
<comment type="interaction">
    <interactant intactId="EBI-10175218">
        <id>Q9NQ69</id>
    </interactant>
    <interactant intactId="EBI-347804">
        <id>P68400</id>
        <label>CSNK2A1</label>
    </interactant>
    <organismsDiffer>false</organismsDiffer>
    <experiments>3</experiments>
</comment>
<comment type="interaction">
    <interactant intactId="EBI-10175218">
        <id>Q9NQ69</id>
    </interactant>
    <interactant intactId="EBI-5453285">
        <id>Q2TBE0</id>
        <label>CWF19L2</label>
    </interactant>
    <organismsDiffer>false</organismsDiffer>
    <experiments>3</experiments>
</comment>
<comment type="interaction">
    <interactant intactId="EBI-10175218">
        <id>Q9NQ69</id>
    </interactant>
    <interactant intactId="EBI-11955401">
        <id>Q86VF2-5</id>
        <label>IGFN1</label>
    </interactant>
    <organismsDiffer>false</organismsDiffer>
    <experiments>3</experiments>
</comment>
<comment type="interaction">
    <interactant intactId="EBI-10175218">
        <id>Q9NQ69</id>
    </interactant>
    <interactant intactId="EBI-1053974">
        <id>P50053</id>
        <label>KHK</label>
    </interactant>
    <organismsDiffer>false</organismsDiffer>
    <experiments>3</experiments>
</comment>
<comment type="interaction">
    <interactant intactId="EBI-10175218">
        <id>Q9NQ69</id>
    </interactant>
    <interactant intactId="EBI-12204387">
        <id>P50053-2</id>
        <label>KHK</label>
    </interactant>
    <organismsDiffer>false</organismsDiffer>
    <experiments>3</experiments>
</comment>
<comment type="interaction">
    <interactant intactId="EBI-10175218">
        <id>Q9NQ69</id>
    </interactant>
    <interactant intactId="EBI-11979761">
        <id>Q86U70-2</id>
        <label>LDB1</label>
    </interactant>
    <organismsDiffer>false</organismsDiffer>
    <experiments>3</experiments>
</comment>
<comment type="interaction">
    <interactant intactId="EBI-10175218">
        <id>Q9NQ69</id>
    </interactant>
    <interactant intactId="EBI-17208936">
        <id>P0CB47</id>
        <label>UBTFL1</label>
    </interactant>
    <organismsDiffer>false</organismsDiffer>
    <experiments>3</experiments>
</comment>
<comment type="subcellular location">
    <subcellularLocation>
        <location evidence="2">Nucleus</location>
    </subcellularLocation>
</comment>
<comment type="alternative products">
    <event type="alternative splicing"/>
    <isoform>
        <id>Q9NQ69-1</id>
        <name>1</name>
        <sequence type="displayed"/>
    </isoform>
    <isoform>
        <id>Q9NQ69-2</id>
        <name>2</name>
        <sequence type="described" ref="VSP_036428"/>
    </isoform>
    <isoform>
        <id>Q9NQ69-3</id>
        <name>3</name>
        <sequence type="described" ref="VSP_036428 VSP_036429"/>
    </isoform>
    <isoform>
        <id>Q9NQ69-4</id>
        <name>4</name>
        <sequence type="described" ref="VSP_036429"/>
    </isoform>
</comment>
<evidence type="ECO:0000250" key="1"/>
<evidence type="ECO:0000255" key="2">
    <source>
        <dbReference type="PROSITE-ProRule" id="PRU00108"/>
    </source>
</evidence>
<evidence type="ECO:0000255" key="3">
    <source>
        <dbReference type="PROSITE-ProRule" id="PRU00125"/>
    </source>
</evidence>
<evidence type="ECO:0000256" key="4">
    <source>
        <dbReference type="SAM" id="MobiDB-lite"/>
    </source>
</evidence>
<evidence type="ECO:0000303" key="5">
    <source>
    </source>
</evidence>
<evidence type="ECO:0000305" key="6"/>
<evidence type="ECO:0007829" key="7">
    <source>
        <dbReference type="PDB" id="2DMQ"/>
    </source>
</evidence>
<proteinExistence type="evidence at protein level"/>
<gene>
    <name type="primary">LHX9</name>
</gene>
<organism>
    <name type="scientific">Homo sapiens</name>
    <name type="common">Human</name>
    <dbReference type="NCBI Taxonomy" id="9606"/>
    <lineage>
        <taxon>Eukaryota</taxon>
        <taxon>Metazoa</taxon>
        <taxon>Chordata</taxon>
        <taxon>Craniata</taxon>
        <taxon>Vertebrata</taxon>
        <taxon>Euteleostomi</taxon>
        <taxon>Mammalia</taxon>
        <taxon>Eutheria</taxon>
        <taxon>Euarchontoglires</taxon>
        <taxon>Primates</taxon>
        <taxon>Haplorrhini</taxon>
        <taxon>Catarrhini</taxon>
        <taxon>Hominidae</taxon>
        <taxon>Homo</taxon>
    </lineage>
</organism>
<name>LHX9_HUMAN</name>
<sequence>MEIVGCRAEDNSCPFRPPAMLFHGISGGHIQGIMEEMERRSKTEARLAKGAQLNGRDAGMPPLSPEKPALCAGCGGKISDRYYLLAVDKQWHLRCLKCCECKLALESELTCFAKDGSIYCKEDYYRRFSVQRCARCHLGISASEMVMRARDSVYHLSCFTCSTCNKTLTTGDHFGMKDSLVYCRAHFETLLQGEYPPQLSYTELAAKSGGLALPYFNGTGTVQKGRPRKRKSPALGVDIVNYNSGCNENEADHLDRDQQPYPPSQKTKRMRTSFKHHQLRTMKSYFAINHNPDAKDLKQLAQKTGLTKRVLQVWFQNARAKFRRNLLRQENGGVDKADGTSLPAPPSADSGALTPPGTATTLTDLTNPTITVVTSVTSNMDSHESGSPSQTTLTNLF</sequence>